<reference key="1">
    <citation type="submission" date="2007-05" db="EMBL/GenBank/DDBJ databases">
        <title>Complete sequence of Thermosipho melanesiensis BI429.</title>
        <authorList>
            <consortium name="US DOE Joint Genome Institute"/>
            <person name="Copeland A."/>
            <person name="Lucas S."/>
            <person name="Lapidus A."/>
            <person name="Barry K."/>
            <person name="Glavina del Rio T."/>
            <person name="Dalin E."/>
            <person name="Tice H."/>
            <person name="Pitluck S."/>
            <person name="Chertkov O."/>
            <person name="Brettin T."/>
            <person name="Bruce D."/>
            <person name="Detter J.C."/>
            <person name="Han C."/>
            <person name="Schmutz J."/>
            <person name="Larimer F."/>
            <person name="Land M."/>
            <person name="Hauser L."/>
            <person name="Kyrpides N."/>
            <person name="Mikhailova N."/>
            <person name="Nelson K."/>
            <person name="Gogarten J.P."/>
            <person name="Noll K."/>
            <person name="Richardson P."/>
        </authorList>
    </citation>
    <scope>NUCLEOTIDE SEQUENCE [LARGE SCALE GENOMIC DNA]</scope>
    <source>
        <strain>DSM 12029 / CIP 104789 / BI429</strain>
    </source>
</reference>
<gene>
    <name evidence="1" type="primary">rpmC</name>
    <name type="ordered locus">Tmel_0961</name>
</gene>
<dbReference type="EMBL" id="CP000716">
    <property type="protein sequence ID" value="ABR30822.1"/>
    <property type="molecule type" value="Genomic_DNA"/>
</dbReference>
<dbReference type="RefSeq" id="WP_012057183.1">
    <property type="nucleotide sequence ID" value="NC_009616.1"/>
</dbReference>
<dbReference type="SMR" id="A6LLM1"/>
<dbReference type="STRING" id="391009.Tmel_0961"/>
<dbReference type="KEGG" id="tme:Tmel_0961"/>
<dbReference type="eggNOG" id="COG0255">
    <property type="taxonomic scope" value="Bacteria"/>
</dbReference>
<dbReference type="HOGENOM" id="CLU_158491_5_2_0"/>
<dbReference type="OrthoDB" id="9815192at2"/>
<dbReference type="Proteomes" id="UP000001110">
    <property type="component" value="Chromosome"/>
</dbReference>
<dbReference type="GO" id="GO:0022625">
    <property type="term" value="C:cytosolic large ribosomal subunit"/>
    <property type="evidence" value="ECO:0007669"/>
    <property type="project" value="TreeGrafter"/>
</dbReference>
<dbReference type="GO" id="GO:0003735">
    <property type="term" value="F:structural constituent of ribosome"/>
    <property type="evidence" value="ECO:0007669"/>
    <property type="project" value="InterPro"/>
</dbReference>
<dbReference type="GO" id="GO:0006412">
    <property type="term" value="P:translation"/>
    <property type="evidence" value="ECO:0007669"/>
    <property type="project" value="UniProtKB-UniRule"/>
</dbReference>
<dbReference type="CDD" id="cd00427">
    <property type="entry name" value="Ribosomal_L29_HIP"/>
    <property type="match status" value="1"/>
</dbReference>
<dbReference type="FunFam" id="1.10.287.310:FF:000001">
    <property type="entry name" value="50S ribosomal protein L29"/>
    <property type="match status" value="1"/>
</dbReference>
<dbReference type="Gene3D" id="1.10.287.310">
    <property type="match status" value="1"/>
</dbReference>
<dbReference type="HAMAP" id="MF_00374">
    <property type="entry name" value="Ribosomal_uL29"/>
    <property type="match status" value="1"/>
</dbReference>
<dbReference type="InterPro" id="IPR050063">
    <property type="entry name" value="Ribosomal_protein_uL29"/>
</dbReference>
<dbReference type="InterPro" id="IPR001854">
    <property type="entry name" value="Ribosomal_uL29"/>
</dbReference>
<dbReference type="InterPro" id="IPR036049">
    <property type="entry name" value="Ribosomal_uL29_sf"/>
</dbReference>
<dbReference type="NCBIfam" id="TIGR00012">
    <property type="entry name" value="L29"/>
    <property type="match status" value="1"/>
</dbReference>
<dbReference type="PANTHER" id="PTHR10916">
    <property type="entry name" value="60S RIBOSOMAL PROTEIN L35/50S RIBOSOMAL PROTEIN L29"/>
    <property type="match status" value="1"/>
</dbReference>
<dbReference type="PANTHER" id="PTHR10916:SF0">
    <property type="entry name" value="LARGE RIBOSOMAL SUBUNIT PROTEIN UL29C"/>
    <property type="match status" value="1"/>
</dbReference>
<dbReference type="Pfam" id="PF00831">
    <property type="entry name" value="Ribosomal_L29"/>
    <property type="match status" value="1"/>
</dbReference>
<dbReference type="SUPFAM" id="SSF46561">
    <property type="entry name" value="Ribosomal protein L29 (L29p)"/>
    <property type="match status" value="1"/>
</dbReference>
<sequence>MKAAELRNLTNEELMNLLEEKKRTLMNLRFQNVLGQLNDHSQISKTKKDIARIKTILRERELGVRR</sequence>
<accession>A6LLM1</accession>
<organism>
    <name type="scientific">Thermosipho melanesiensis (strain DSM 12029 / CIP 104789 / BI429)</name>
    <dbReference type="NCBI Taxonomy" id="391009"/>
    <lineage>
        <taxon>Bacteria</taxon>
        <taxon>Thermotogati</taxon>
        <taxon>Thermotogota</taxon>
        <taxon>Thermotogae</taxon>
        <taxon>Thermotogales</taxon>
        <taxon>Fervidobacteriaceae</taxon>
        <taxon>Thermosipho</taxon>
    </lineage>
</organism>
<proteinExistence type="inferred from homology"/>
<feature type="chain" id="PRO_1000007645" description="Large ribosomal subunit protein uL29">
    <location>
        <begin position="1"/>
        <end position="66"/>
    </location>
</feature>
<evidence type="ECO:0000255" key="1">
    <source>
        <dbReference type="HAMAP-Rule" id="MF_00374"/>
    </source>
</evidence>
<evidence type="ECO:0000305" key="2"/>
<keyword id="KW-0687">Ribonucleoprotein</keyword>
<keyword id="KW-0689">Ribosomal protein</keyword>
<name>RL29_THEM4</name>
<comment type="similarity">
    <text evidence="1">Belongs to the universal ribosomal protein uL29 family.</text>
</comment>
<protein>
    <recommendedName>
        <fullName evidence="1">Large ribosomal subunit protein uL29</fullName>
    </recommendedName>
    <alternativeName>
        <fullName evidence="2">50S ribosomal protein L29</fullName>
    </alternativeName>
</protein>